<dbReference type="EC" id="4.2.1.19" evidence="1"/>
<dbReference type="EMBL" id="CP001197">
    <property type="protein sequence ID" value="ACL10058.1"/>
    <property type="molecule type" value="Genomic_DNA"/>
</dbReference>
<dbReference type="SMR" id="B8DNB6"/>
<dbReference type="STRING" id="883.DvMF_3122"/>
<dbReference type="KEGG" id="dvm:DvMF_3122"/>
<dbReference type="eggNOG" id="COG0131">
    <property type="taxonomic scope" value="Bacteria"/>
</dbReference>
<dbReference type="HOGENOM" id="CLU_044308_3_0_7"/>
<dbReference type="OrthoDB" id="9790411at2"/>
<dbReference type="UniPathway" id="UPA00031">
    <property type="reaction ID" value="UER00011"/>
</dbReference>
<dbReference type="GO" id="GO:0005737">
    <property type="term" value="C:cytoplasm"/>
    <property type="evidence" value="ECO:0007669"/>
    <property type="project" value="UniProtKB-SubCell"/>
</dbReference>
<dbReference type="GO" id="GO:0004424">
    <property type="term" value="F:imidazoleglycerol-phosphate dehydratase activity"/>
    <property type="evidence" value="ECO:0007669"/>
    <property type="project" value="UniProtKB-UniRule"/>
</dbReference>
<dbReference type="GO" id="GO:0000105">
    <property type="term" value="P:L-histidine biosynthetic process"/>
    <property type="evidence" value="ECO:0007669"/>
    <property type="project" value="UniProtKB-UniRule"/>
</dbReference>
<dbReference type="CDD" id="cd07914">
    <property type="entry name" value="IGPD"/>
    <property type="match status" value="1"/>
</dbReference>
<dbReference type="FunFam" id="3.30.230.40:FF:000003">
    <property type="entry name" value="Imidazoleglycerol-phosphate dehydratase HisB"/>
    <property type="match status" value="1"/>
</dbReference>
<dbReference type="Gene3D" id="3.30.230.40">
    <property type="entry name" value="Imidazole glycerol phosphate dehydratase, domain 1"/>
    <property type="match status" value="2"/>
</dbReference>
<dbReference type="HAMAP" id="MF_00076">
    <property type="entry name" value="HisB"/>
    <property type="match status" value="1"/>
</dbReference>
<dbReference type="InterPro" id="IPR038494">
    <property type="entry name" value="IGPD_sf"/>
</dbReference>
<dbReference type="InterPro" id="IPR000807">
    <property type="entry name" value="ImidazoleglycerolP_deHydtase"/>
</dbReference>
<dbReference type="InterPro" id="IPR020565">
    <property type="entry name" value="ImidazoleglycerP_deHydtase_CS"/>
</dbReference>
<dbReference type="InterPro" id="IPR020568">
    <property type="entry name" value="Ribosomal_Su5_D2-typ_SF"/>
</dbReference>
<dbReference type="PANTHER" id="PTHR23133:SF2">
    <property type="entry name" value="IMIDAZOLEGLYCEROL-PHOSPHATE DEHYDRATASE"/>
    <property type="match status" value="1"/>
</dbReference>
<dbReference type="PANTHER" id="PTHR23133">
    <property type="entry name" value="IMIDAZOLEGLYCEROL-PHOSPHATE DEHYDRATASE HIS7"/>
    <property type="match status" value="1"/>
</dbReference>
<dbReference type="Pfam" id="PF00475">
    <property type="entry name" value="IGPD"/>
    <property type="match status" value="1"/>
</dbReference>
<dbReference type="SUPFAM" id="SSF54211">
    <property type="entry name" value="Ribosomal protein S5 domain 2-like"/>
    <property type="match status" value="2"/>
</dbReference>
<dbReference type="PROSITE" id="PS00954">
    <property type="entry name" value="IGP_DEHYDRATASE_1"/>
    <property type="match status" value="1"/>
</dbReference>
<gene>
    <name evidence="1" type="primary">hisB</name>
    <name type="ordered locus">DvMF_3122</name>
</gene>
<reference key="1">
    <citation type="submission" date="2008-10" db="EMBL/GenBank/DDBJ databases">
        <title>Complete sequence of Desulfovibrio vulgaris str. 'Miyazaki F'.</title>
        <authorList>
            <person name="Lucas S."/>
            <person name="Copeland A."/>
            <person name="Lapidus A."/>
            <person name="Glavina del Rio T."/>
            <person name="Dalin E."/>
            <person name="Tice H."/>
            <person name="Bruce D."/>
            <person name="Goodwin L."/>
            <person name="Pitluck S."/>
            <person name="Sims D."/>
            <person name="Brettin T."/>
            <person name="Detter J.C."/>
            <person name="Han C."/>
            <person name="Larimer F."/>
            <person name="Land M."/>
            <person name="Hauser L."/>
            <person name="Kyrpides N."/>
            <person name="Mikhailova N."/>
            <person name="Hazen T.C."/>
            <person name="Richardson P."/>
        </authorList>
    </citation>
    <scope>NUCLEOTIDE SEQUENCE [LARGE SCALE GENOMIC DNA]</scope>
    <source>
        <strain>DSM 19637 / Miyazaki F</strain>
    </source>
</reference>
<proteinExistence type="inferred from homology"/>
<keyword id="KW-0028">Amino-acid biosynthesis</keyword>
<keyword id="KW-0963">Cytoplasm</keyword>
<keyword id="KW-0368">Histidine biosynthesis</keyword>
<keyword id="KW-0456">Lyase</keyword>
<evidence type="ECO:0000255" key="1">
    <source>
        <dbReference type="HAMAP-Rule" id="MF_00076"/>
    </source>
</evidence>
<name>HIS7_NITV9</name>
<feature type="chain" id="PRO_1000117081" description="Imidazoleglycerol-phosphate dehydratase">
    <location>
        <begin position="1"/>
        <end position="196"/>
    </location>
</feature>
<sequence>MSQRSAAVFRETKETSIRLDLVVDGQGLVNVHTGFGMADHVITLAAFWAGFDLTLSCTGDLEIDAHHTVEDVGLCLGQALAEALGERSGIARVGFARVPMDEALADVCIDISGRPWLEWRGDDLLPPVIAGQERDLWREFLKAFASAARMNLHVSFLYGRNGHHLLESAAKGLGLALRQAVRRDRETLLSTKGSLD</sequence>
<accession>B8DNB6</accession>
<organism>
    <name type="scientific">Nitratidesulfovibrio vulgaris (strain DSM 19637 / Miyazaki F)</name>
    <name type="common">Desulfovibrio vulgaris</name>
    <dbReference type="NCBI Taxonomy" id="883"/>
    <lineage>
        <taxon>Bacteria</taxon>
        <taxon>Pseudomonadati</taxon>
        <taxon>Thermodesulfobacteriota</taxon>
        <taxon>Desulfovibrionia</taxon>
        <taxon>Desulfovibrionales</taxon>
        <taxon>Desulfovibrionaceae</taxon>
        <taxon>Nitratidesulfovibrio</taxon>
    </lineage>
</organism>
<protein>
    <recommendedName>
        <fullName evidence="1">Imidazoleglycerol-phosphate dehydratase</fullName>
        <shortName evidence="1">IGPD</shortName>
        <ecNumber evidence="1">4.2.1.19</ecNumber>
    </recommendedName>
</protein>
<comment type="catalytic activity">
    <reaction evidence="1">
        <text>D-erythro-1-(imidazol-4-yl)glycerol 3-phosphate = 3-(imidazol-4-yl)-2-oxopropyl phosphate + H2O</text>
        <dbReference type="Rhea" id="RHEA:11040"/>
        <dbReference type="ChEBI" id="CHEBI:15377"/>
        <dbReference type="ChEBI" id="CHEBI:57766"/>
        <dbReference type="ChEBI" id="CHEBI:58278"/>
        <dbReference type="EC" id="4.2.1.19"/>
    </reaction>
</comment>
<comment type="pathway">
    <text evidence="1">Amino-acid biosynthesis; L-histidine biosynthesis; L-histidine from 5-phospho-alpha-D-ribose 1-diphosphate: step 6/9.</text>
</comment>
<comment type="subcellular location">
    <subcellularLocation>
        <location evidence="1">Cytoplasm</location>
    </subcellularLocation>
</comment>
<comment type="similarity">
    <text evidence="1">Belongs to the imidazoleglycerol-phosphate dehydratase family.</text>
</comment>